<comment type="function">
    <text evidence="1">The phosphoenolpyruvate-dependent sugar phosphotransferase system (sugar PTS), a major carbohydrate active transport system, catalyzes the phosphorylation of incoming sugar substrates concomitantly with their translocation across the cell membrane. This system is involved in glucose transport.</text>
</comment>
<comment type="catalytic activity">
    <reaction evidence="1">
        <text>N(pros)-phospho-L-histidyl-[protein] + D-glucose(out) = D-glucose 6-phosphate(in) + L-histidyl-[protein]</text>
        <dbReference type="Rhea" id="RHEA:33367"/>
        <dbReference type="Rhea" id="RHEA-COMP:9745"/>
        <dbReference type="Rhea" id="RHEA-COMP:9746"/>
        <dbReference type="ChEBI" id="CHEBI:4167"/>
        <dbReference type="ChEBI" id="CHEBI:29979"/>
        <dbReference type="ChEBI" id="CHEBI:61548"/>
        <dbReference type="ChEBI" id="CHEBI:64837"/>
        <dbReference type="EC" id="2.7.1.199"/>
    </reaction>
</comment>
<comment type="subcellular location">
    <subcellularLocation>
        <location evidence="4">Cell membrane</location>
        <topology evidence="4">Multi-pass membrane protein</topology>
    </subcellularLocation>
</comment>
<comment type="domain">
    <text evidence="4">The EIIC domain forms the PTS system translocation channel and contains the specific substrate-binding site.</text>
</comment>
<comment type="domain">
    <text evidence="3">The EIIB domain is phosphorylated by phospho-EIIA on a cysteinyl or histidyl residue, depending on the transported sugar. Then, it transfers the phosphoryl group to the sugar substrate concomitantly with the sugar uptake processed by the EIIC domain.</text>
</comment>
<comment type="domain">
    <text evidence="2">The EIIA domain is phosphorylated by phospho-HPr on a histidyl residue. Then, it transfers the phosphoryl group to the EIIB domain.</text>
</comment>
<gene>
    <name type="primary">ptsG</name>
    <name type="synonym">glcA</name>
    <name type="ordered locus">SAB0129c</name>
</gene>
<feature type="chain" id="PRO_0000351392" description="PTS system glucose-specific EIICBA component">
    <location>
        <begin position="1"/>
        <end position="681"/>
    </location>
</feature>
<feature type="transmembrane region" description="Helical" evidence="4">
    <location>
        <begin position="16"/>
        <end position="36"/>
    </location>
</feature>
<feature type="transmembrane region" description="Helical" evidence="4">
    <location>
        <begin position="73"/>
        <end position="93"/>
    </location>
</feature>
<feature type="transmembrane region" description="Helical" evidence="4">
    <location>
        <begin position="126"/>
        <end position="146"/>
    </location>
</feature>
<feature type="transmembrane region" description="Helical" evidence="4">
    <location>
        <begin position="170"/>
        <end position="190"/>
    </location>
</feature>
<feature type="transmembrane region" description="Helical" evidence="4">
    <location>
        <begin position="199"/>
        <end position="219"/>
    </location>
</feature>
<feature type="transmembrane region" description="Helical" evidence="4">
    <location>
        <begin position="273"/>
        <end position="293"/>
    </location>
</feature>
<feature type="transmembrane region" description="Helical" evidence="4">
    <location>
        <begin position="303"/>
        <end position="323"/>
    </location>
</feature>
<feature type="transmembrane region" description="Helical" evidence="4">
    <location>
        <begin position="328"/>
        <end position="348"/>
    </location>
</feature>
<feature type="transmembrane region" description="Helical" evidence="4">
    <location>
        <begin position="355"/>
        <end position="375"/>
    </location>
</feature>
<feature type="transmembrane region" description="Helical" evidence="4">
    <location>
        <begin position="383"/>
        <end position="403"/>
    </location>
</feature>
<feature type="domain" description="PTS EIIC type-1" evidence="4">
    <location>
        <begin position="3"/>
        <end position="414"/>
    </location>
</feature>
<feature type="domain" description="PTS EIIB type-1" evidence="3">
    <location>
        <begin position="425"/>
        <end position="506"/>
    </location>
</feature>
<feature type="domain" description="PTS EIIA type-1" evidence="2">
    <location>
        <begin position="551"/>
        <end position="655"/>
    </location>
</feature>
<feature type="active site" description="Phosphocysteine intermediate; for EIIB activity" evidence="3">
    <location>
        <position position="447"/>
    </location>
</feature>
<feature type="active site" description="Tele-phosphohistidine intermediate; for EIIA activity" evidence="2">
    <location>
        <position position="603"/>
    </location>
</feature>
<protein>
    <recommendedName>
        <fullName evidence="1">PTS system glucose-specific EIICBA component</fullName>
        <ecNumber evidence="1">2.7.1.199</ecNumber>
    </recommendedName>
    <alternativeName>
        <fullName evidence="1">EIICBA-Glc</fullName>
        <shortName evidence="1">EII-Glc</shortName>
    </alternativeName>
    <alternativeName>
        <fullName evidence="5">EIICBA-Glc 1</fullName>
    </alternativeName>
    <domain>
        <recommendedName>
            <fullName evidence="1">Glucose permease IIC component</fullName>
        </recommendedName>
        <alternativeName>
            <fullName evidence="1">PTS system glucose-specific EIIC component</fullName>
        </alternativeName>
    </domain>
    <domain>
        <recommendedName>
            <fullName evidence="1">Glucose-specific phosphotransferase enzyme IIB component</fullName>
        </recommendedName>
        <alternativeName>
            <fullName evidence="1">PTS system glucose-specific EIIB component</fullName>
        </alternativeName>
    </domain>
    <domain>
        <recommendedName>
            <fullName evidence="1">Glucose-specific phosphotransferase enzyme IIA component</fullName>
        </recommendedName>
        <alternativeName>
            <fullName evidence="1">PTS system glucose-specific EIIA component</fullName>
        </alternativeName>
    </domain>
</protein>
<sequence>MRKKLFGQLQRIGKALMLPVAILPAAGLLLAIGTAMQGEALQHYLPFIQNGGVQTVAKLMTGAGGIIFDNLPMIFALGVAIGLAGGDGVAAIAAFVGYIIMNKTMGDFLQVTPKNIGDPASGYASILGIPTLQTGVFGGIIIGALAAWCYNKFYNINLPSYLGFFAGKRFVPIMMATTSFILAFPMALIWPTIQSGLNAFSTGLLDSNTGVAVFLFGFIKRLLIPFGLHHIFHAPFWFEFGSWKNAAGEIIHGDQRIFIEQIREGAHLTAGKFMQGEFPVMMFGLPAAALAIYHTAKPENKKVVAGLMGSAALTSFLTGITEPLEFSFLFVAPLLFFIHAVLDGLSFLTLYLLDLHLGYTFSGGFIDYFLLGILPNKTQWWLVIPVGLVYAVIYYFVFRFLIVKLKYKTPGREDKQSQAATASATELPYAVLEAMGGKANIKHLDACITRLRVEVNDKSKVDVPGLKDLGASGVLEVGNNMQAIFGPKSDQIKHEMQQIMNGQVVENPTTMEDDKDETVVVAEDKSATSELSHIVHAPLTGEVTPLSEVPDQVFSEKMMGDGIAIKPSQGEVRAPFNGKVQMIFPTKHAIGLVSDSGLELLIHIGLDTVKLNGEGFTLHVEEGQEVKQGDLLINFDLDYIRKHAKSDITPIIVTQGNITNLDFKQGEHGNISFGDQLFEAK</sequence>
<organism>
    <name type="scientific">Staphylococcus aureus (strain bovine RF122 / ET3-1)</name>
    <dbReference type="NCBI Taxonomy" id="273036"/>
    <lineage>
        <taxon>Bacteria</taxon>
        <taxon>Bacillati</taxon>
        <taxon>Bacillota</taxon>
        <taxon>Bacilli</taxon>
        <taxon>Bacillales</taxon>
        <taxon>Staphylococcaceae</taxon>
        <taxon>Staphylococcus</taxon>
    </lineage>
</organism>
<reference key="1">
    <citation type="journal article" date="2007" name="PLoS ONE">
        <title>Molecular correlates of host specialization in Staphylococcus aureus.</title>
        <authorList>
            <person name="Herron-Olson L."/>
            <person name="Fitzgerald J.R."/>
            <person name="Musser J.M."/>
            <person name="Kapur V."/>
        </authorList>
    </citation>
    <scope>NUCLEOTIDE SEQUENCE [LARGE SCALE GENOMIC DNA]</scope>
    <source>
        <strain>bovine RF122 / ET3-1</strain>
    </source>
</reference>
<evidence type="ECO:0000250" key="1">
    <source>
        <dbReference type="UniProtKB" id="Q57071"/>
    </source>
</evidence>
<evidence type="ECO:0000255" key="2">
    <source>
        <dbReference type="PROSITE-ProRule" id="PRU00416"/>
    </source>
</evidence>
<evidence type="ECO:0000255" key="3">
    <source>
        <dbReference type="PROSITE-ProRule" id="PRU00421"/>
    </source>
</evidence>
<evidence type="ECO:0000255" key="4">
    <source>
        <dbReference type="PROSITE-ProRule" id="PRU00426"/>
    </source>
</evidence>
<evidence type="ECO:0000305" key="5"/>
<dbReference type="EC" id="2.7.1.199" evidence="1"/>
<dbReference type="EMBL" id="AJ938182">
    <property type="protein sequence ID" value="CAI79817.1"/>
    <property type="molecule type" value="Genomic_DNA"/>
</dbReference>
<dbReference type="RefSeq" id="WP_001227715.1">
    <property type="nucleotide sequence ID" value="NC_007622.1"/>
</dbReference>
<dbReference type="SMR" id="Q2YUZ1"/>
<dbReference type="KEGG" id="sab:SAB0129c"/>
<dbReference type="HOGENOM" id="CLU_012312_1_1_9"/>
<dbReference type="GO" id="GO:0005886">
    <property type="term" value="C:plasma membrane"/>
    <property type="evidence" value="ECO:0007669"/>
    <property type="project" value="UniProtKB-SubCell"/>
</dbReference>
<dbReference type="GO" id="GO:0055056">
    <property type="term" value="F:D-glucose transmembrane transporter activity"/>
    <property type="evidence" value="ECO:0007669"/>
    <property type="project" value="InterPro"/>
</dbReference>
<dbReference type="GO" id="GO:0016301">
    <property type="term" value="F:kinase activity"/>
    <property type="evidence" value="ECO:0007669"/>
    <property type="project" value="UniProtKB-KW"/>
</dbReference>
<dbReference type="GO" id="GO:0008982">
    <property type="term" value="F:protein-N(PI)-phosphohistidine-sugar phosphotransferase activity"/>
    <property type="evidence" value="ECO:0007669"/>
    <property type="project" value="InterPro"/>
</dbReference>
<dbReference type="GO" id="GO:0090563">
    <property type="term" value="F:protein-phosphocysteine-sugar phosphotransferase activity"/>
    <property type="evidence" value="ECO:0007669"/>
    <property type="project" value="TreeGrafter"/>
</dbReference>
<dbReference type="GO" id="GO:1904659">
    <property type="term" value="P:D-glucose transmembrane transport"/>
    <property type="evidence" value="ECO:0007669"/>
    <property type="project" value="InterPro"/>
</dbReference>
<dbReference type="GO" id="GO:0009401">
    <property type="term" value="P:phosphoenolpyruvate-dependent sugar phosphotransferase system"/>
    <property type="evidence" value="ECO:0007669"/>
    <property type="project" value="UniProtKB-KW"/>
</dbReference>
<dbReference type="CDD" id="cd00210">
    <property type="entry name" value="PTS_IIA_glc"/>
    <property type="match status" value="1"/>
</dbReference>
<dbReference type="CDD" id="cd00212">
    <property type="entry name" value="PTS_IIB_glc"/>
    <property type="match status" value="1"/>
</dbReference>
<dbReference type="FunFam" id="2.70.70.10:FF:000001">
    <property type="entry name" value="PTS system glucose-specific IIA component"/>
    <property type="match status" value="1"/>
</dbReference>
<dbReference type="FunFam" id="3.30.1360.60:FF:000001">
    <property type="entry name" value="PTS system glucose-specific IIBC component PtsG"/>
    <property type="match status" value="1"/>
</dbReference>
<dbReference type="Gene3D" id="2.70.70.10">
    <property type="entry name" value="Glucose Permease (Domain IIA)"/>
    <property type="match status" value="1"/>
</dbReference>
<dbReference type="Gene3D" id="3.30.1360.60">
    <property type="entry name" value="Glucose permease domain IIB"/>
    <property type="match status" value="1"/>
</dbReference>
<dbReference type="InterPro" id="IPR011055">
    <property type="entry name" value="Dup_hybrid_motif"/>
</dbReference>
<dbReference type="InterPro" id="IPR036878">
    <property type="entry name" value="Glu_permease_IIB"/>
</dbReference>
<dbReference type="InterPro" id="IPR018113">
    <property type="entry name" value="PTrfase_EIIB_Cys"/>
</dbReference>
<dbReference type="InterPro" id="IPR001127">
    <property type="entry name" value="PTS_EIIA_1_perm"/>
</dbReference>
<dbReference type="InterPro" id="IPR003352">
    <property type="entry name" value="PTS_EIIC"/>
</dbReference>
<dbReference type="InterPro" id="IPR013013">
    <property type="entry name" value="PTS_EIIC_1"/>
</dbReference>
<dbReference type="InterPro" id="IPR050429">
    <property type="entry name" value="PTS_Glucose_EIICBA"/>
</dbReference>
<dbReference type="InterPro" id="IPR001996">
    <property type="entry name" value="PTS_IIB_1"/>
</dbReference>
<dbReference type="InterPro" id="IPR011299">
    <property type="entry name" value="PTS_IIBC_glc"/>
</dbReference>
<dbReference type="NCBIfam" id="TIGR00826">
    <property type="entry name" value="EIIB_glc"/>
    <property type="match status" value="1"/>
</dbReference>
<dbReference type="NCBIfam" id="TIGR00830">
    <property type="entry name" value="PTBA"/>
    <property type="match status" value="1"/>
</dbReference>
<dbReference type="NCBIfam" id="TIGR02002">
    <property type="entry name" value="PTS-II-BC-glcB"/>
    <property type="match status" value="1"/>
</dbReference>
<dbReference type="PANTHER" id="PTHR30009">
    <property type="entry name" value="CYTOCHROME C-TYPE SYNTHESIS PROTEIN AND PTS TRANSMEMBRANE COMPONENT"/>
    <property type="match status" value="1"/>
</dbReference>
<dbReference type="PANTHER" id="PTHR30009:SF20">
    <property type="entry name" value="PTS SYSTEM GLUCOSE-SPECIFIC EIICB COMPONENT-RELATED"/>
    <property type="match status" value="1"/>
</dbReference>
<dbReference type="Pfam" id="PF00358">
    <property type="entry name" value="PTS_EIIA_1"/>
    <property type="match status" value="1"/>
</dbReference>
<dbReference type="Pfam" id="PF00367">
    <property type="entry name" value="PTS_EIIB"/>
    <property type="match status" value="1"/>
</dbReference>
<dbReference type="Pfam" id="PF02378">
    <property type="entry name" value="PTS_EIIC"/>
    <property type="match status" value="1"/>
</dbReference>
<dbReference type="SUPFAM" id="SSF51261">
    <property type="entry name" value="Duplicated hybrid motif"/>
    <property type="match status" value="1"/>
</dbReference>
<dbReference type="SUPFAM" id="SSF55604">
    <property type="entry name" value="Glucose permease domain IIB"/>
    <property type="match status" value="1"/>
</dbReference>
<dbReference type="PROSITE" id="PS51093">
    <property type="entry name" value="PTS_EIIA_TYPE_1"/>
    <property type="match status" value="1"/>
</dbReference>
<dbReference type="PROSITE" id="PS00371">
    <property type="entry name" value="PTS_EIIA_TYPE_1_HIS"/>
    <property type="match status" value="1"/>
</dbReference>
<dbReference type="PROSITE" id="PS51098">
    <property type="entry name" value="PTS_EIIB_TYPE_1"/>
    <property type="match status" value="1"/>
</dbReference>
<dbReference type="PROSITE" id="PS01035">
    <property type="entry name" value="PTS_EIIB_TYPE_1_CYS"/>
    <property type="match status" value="1"/>
</dbReference>
<dbReference type="PROSITE" id="PS51103">
    <property type="entry name" value="PTS_EIIC_TYPE_1"/>
    <property type="match status" value="1"/>
</dbReference>
<accession>Q2YUZ1</accession>
<name>PTG3C_STAAB</name>
<proteinExistence type="inferred from homology"/>
<keyword id="KW-1003">Cell membrane</keyword>
<keyword id="KW-0418">Kinase</keyword>
<keyword id="KW-0472">Membrane</keyword>
<keyword id="KW-0598">Phosphotransferase system</keyword>
<keyword id="KW-0762">Sugar transport</keyword>
<keyword id="KW-0808">Transferase</keyword>
<keyword id="KW-0812">Transmembrane</keyword>
<keyword id="KW-1133">Transmembrane helix</keyword>
<keyword id="KW-0813">Transport</keyword>